<reference key="1">
    <citation type="journal article" date="1999" name="J. Bacteriol.">
        <title>Catabolism of branched-chain alpha-keto acids in Enterococcus faecalis: the bkd gene cluster, enzymes, and metabolic route.</title>
        <authorList>
            <person name="Ward D.E."/>
            <person name="Ross R.P."/>
            <person name="van der Weijden C.C."/>
            <person name="Snoep J.L."/>
            <person name="Claiborne A."/>
        </authorList>
    </citation>
    <scope>NUCLEOTIDE SEQUENCE [GENOMIC DNA]</scope>
    <source>
        <strain>ATCC 11700 / DSM 20409 / NCIMB 8661 / 10C1</strain>
    </source>
</reference>
<reference key="2">
    <citation type="journal article" date="2003" name="Science">
        <title>Role of mobile DNA in the evolution of vancomycin-resistant Enterococcus faecalis.</title>
        <authorList>
            <person name="Paulsen I.T."/>
            <person name="Banerjei L."/>
            <person name="Myers G.S.A."/>
            <person name="Nelson K.E."/>
            <person name="Seshadri R."/>
            <person name="Read T.D."/>
            <person name="Fouts D.E."/>
            <person name="Eisen J.A."/>
            <person name="Gill S.R."/>
            <person name="Heidelberg J.F."/>
            <person name="Tettelin H."/>
            <person name="Dodson R.J."/>
            <person name="Umayam L.A."/>
            <person name="Brinkac L.M."/>
            <person name="Beanan M.J."/>
            <person name="Daugherty S.C."/>
            <person name="DeBoy R.T."/>
            <person name="Durkin S.A."/>
            <person name="Kolonay J.F."/>
            <person name="Madupu R."/>
            <person name="Nelson W.C."/>
            <person name="Vamathevan J.J."/>
            <person name="Tran B."/>
            <person name="Upton J."/>
            <person name="Hansen T."/>
            <person name="Shetty J."/>
            <person name="Khouri H.M."/>
            <person name="Utterback T.R."/>
            <person name="Radune D."/>
            <person name="Ketchum K.A."/>
            <person name="Dougherty B.A."/>
            <person name="Fraser C.M."/>
        </authorList>
    </citation>
    <scope>NUCLEOTIDE SEQUENCE [LARGE SCALE GENOMIC DNA]</scope>
    <source>
        <strain>ATCC 700802 / V583</strain>
    </source>
</reference>
<comment type="catalytic activity">
    <reaction evidence="1">
        <text>butanoate + ATP = butanoyl phosphate + ADP</text>
        <dbReference type="Rhea" id="RHEA:13585"/>
        <dbReference type="ChEBI" id="CHEBI:17968"/>
        <dbReference type="ChEBI" id="CHEBI:30616"/>
        <dbReference type="ChEBI" id="CHEBI:58079"/>
        <dbReference type="ChEBI" id="CHEBI:456216"/>
        <dbReference type="EC" id="2.7.2.7"/>
    </reaction>
</comment>
<comment type="subcellular location">
    <subcellularLocation>
        <location evidence="1">Cytoplasm</location>
    </subcellularLocation>
</comment>
<comment type="similarity">
    <text evidence="1">Belongs to the acetokinase family.</text>
</comment>
<proteinExistence type="inferred from homology"/>
<name>BUK_ENTFA</name>
<dbReference type="EC" id="2.7.2.7" evidence="1"/>
<dbReference type="EMBL" id="AF149712">
    <property type="protein sequence ID" value="AAD55375.1"/>
    <property type="molecule type" value="Genomic_DNA"/>
</dbReference>
<dbReference type="EMBL" id="AE016830">
    <property type="protein sequence ID" value="AAO81440.1"/>
    <property type="molecule type" value="Genomic_DNA"/>
</dbReference>
<dbReference type="RefSeq" id="NP_815370.1">
    <property type="nucleotide sequence ID" value="NC_004668.1"/>
</dbReference>
<dbReference type="RefSeq" id="WP_002369343.1">
    <property type="nucleotide sequence ID" value="NZ_KE136528.1"/>
</dbReference>
<dbReference type="SMR" id="Q9RPS7"/>
<dbReference type="STRING" id="226185.EF_1662"/>
<dbReference type="EnsemblBacteria" id="AAO81440">
    <property type="protein sequence ID" value="AAO81440"/>
    <property type="gene ID" value="EF_1662"/>
</dbReference>
<dbReference type="KEGG" id="efa:EF1662"/>
<dbReference type="PATRIC" id="fig|226185.45.peg.1849"/>
<dbReference type="eggNOG" id="COG3426">
    <property type="taxonomic scope" value="Bacteria"/>
</dbReference>
<dbReference type="HOGENOM" id="CLU_048716_0_0_9"/>
<dbReference type="Proteomes" id="UP000001415">
    <property type="component" value="Chromosome"/>
</dbReference>
<dbReference type="GO" id="GO:0005737">
    <property type="term" value="C:cytoplasm"/>
    <property type="evidence" value="ECO:0007669"/>
    <property type="project" value="UniProtKB-SubCell"/>
</dbReference>
<dbReference type="GO" id="GO:0008776">
    <property type="term" value="F:acetate kinase activity"/>
    <property type="evidence" value="ECO:0007669"/>
    <property type="project" value="TreeGrafter"/>
</dbReference>
<dbReference type="GO" id="GO:0005524">
    <property type="term" value="F:ATP binding"/>
    <property type="evidence" value="ECO:0007669"/>
    <property type="project" value="UniProtKB-KW"/>
</dbReference>
<dbReference type="GO" id="GO:0047761">
    <property type="term" value="F:butyrate kinase activity"/>
    <property type="evidence" value="ECO:0007669"/>
    <property type="project" value="UniProtKB-UniRule"/>
</dbReference>
<dbReference type="GO" id="GO:0006083">
    <property type="term" value="P:acetate metabolic process"/>
    <property type="evidence" value="ECO:0007669"/>
    <property type="project" value="TreeGrafter"/>
</dbReference>
<dbReference type="CDD" id="cd24011">
    <property type="entry name" value="ASKHA_NBD_BK"/>
    <property type="match status" value="1"/>
</dbReference>
<dbReference type="Gene3D" id="3.30.420.40">
    <property type="match status" value="2"/>
</dbReference>
<dbReference type="HAMAP" id="MF_00542">
    <property type="entry name" value="Butyrate_kinase"/>
    <property type="match status" value="1"/>
</dbReference>
<dbReference type="InterPro" id="IPR000890">
    <property type="entry name" value="Aliphatic_acid_kin_short-chain"/>
</dbReference>
<dbReference type="InterPro" id="IPR023865">
    <property type="entry name" value="Aliphatic_acid_kinase_CS"/>
</dbReference>
<dbReference type="InterPro" id="IPR043129">
    <property type="entry name" value="ATPase_NBD"/>
</dbReference>
<dbReference type="InterPro" id="IPR011245">
    <property type="entry name" value="Butyrate_kin"/>
</dbReference>
<dbReference type="NCBIfam" id="TIGR02707">
    <property type="entry name" value="butyr_kinase"/>
    <property type="match status" value="1"/>
</dbReference>
<dbReference type="NCBIfam" id="NF002834">
    <property type="entry name" value="PRK03011.1-5"/>
    <property type="match status" value="1"/>
</dbReference>
<dbReference type="PANTHER" id="PTHR21060">
    <property type="entry name" value="ACETATE KINASE"/>
    <property type="match status" value="1"/>
</dbReference>
<dbReference type="PANTHER" id="PTHR21060:SF3">
    <property type="entry name" value="BUTYRATE KINASE 2-RELATED"/>
    <property type="match status" value="1"/>
</dbReference>
<dbReference type="Pfam" id="PF00871">
    <property type="entry name" value="Acetate_kinase"/>
    <property type="match status" value="1"/>
</dbReference>
<dbReference type="PIRSF" id="PIRSF036458">
    <property type="entry name" value="Butyrate_kin"/>
    <property type="match status" value="1"/>
</dbReference>
<dbReference type="PRINTS" id="PR00471">
    <property type="entry name" value="ACETATEKNASE"/>
</dbReference>
<dbReference type="SUPFAM" id="SSF53067">
    <property type="entry name" value="Actin-like ATPase domain"/>
    <property type="match status" value="2"/>
</dbReference>
<dbReference type="PROSITE" id="PS01075">
    <property type="entry name" value="ACETATE_KINASE_1"/>
    <property type="match status" value="1"/>
</dbReference>
<dbReference type="PROSITE" id="PS01076">
    <property type="entry name" value="ACETATE_KINASE_2"/>
    <property type="match status" value="1"/>
</dbReference>
<organism>
    <name type="scientific">Enterococcus faecalis (strain ATCC 700802 / V583)</name>
    <dbReference type="NCBI Taxonomy" id="226185"/>
    <lineage>
        <taxon>Bacteria</taxon>
        <taxon>Bacillati</taxon>
        <taxon>Bacillota</taxon>
        <taxon>Bacilli</taxon>
        <taxon>Lactobacillales</taxon>
        <taxon>Enterococcaceae</taxon>
        <taxon>Enterococcus</taxon>
    </lineage>
</organism>
<gene>
    <name evidence="1" type="primary">buk</name>
    <name type="ordered locus">EF_1662</name>
</gene>
<accession>Q9RPS7</accession>
<evidence type="ECO:0000255" key="1">
    <source>
        <dbReference type="HAMAP-Rule" id="MF_00542"/>
    </source>
</evidence>
<evidence type="ECO:0000305" key="2"/>
<keyword id="KW-0067">ATP-binding</keyword>
<keyword id="KW-0963">Cytoplasm</keyword>
<keyword id="KW-0418">Kinase</keyword>
<keyword id="KW-0547">Nucleotide-binding</keyword>
<keyword id="KW-1185">Reference proteome</keyword>
<keyword id="KW-0808">Transferase</keyword>
<sequence length="360" mass="39256">METVLVINPGSTSTKLALFANHDCLAEETLRHSVQELAPFENVVSQTSFRKQMIAEFLETHNIIQLAAVVGRGGLLKPIPGGTYLVDQQMLEDLRTERFNTHASNLGAILANEFAEKYHVPAFIVDPVVVDELQPLARISGLKGIQRRSVGHALNQKAVARKIAEDLGKTYEQSNFIVVHLGGGISLGAHQKGRMVDVVNGLDGEGPYTPERSGALPLVEFAQWILEQELTISQVKKLIAGNSGLKSYLGETDLRHIQAQIAAGDQTANYYLKGMCYQIAKSIGEMAVVLEGTIDAIILTGGAAYSQTVVQEISQKVTWIAPIKVYPGEMEMAALYEGVNRVLTGEEQALNYSEAKIEQE</sequence>
<protein>
    <recommendedName>
        <fullName evidence="1">Probable butyrate kinase</fullName>
        <shortName evidence="1">BK</shortName>
        <ecNumber evidence="1">2.7.2.7</ecNumber>
    </recommendedName>
    <alternativeName>
        <fullName evidence="1">Branched-chain carboxylic acid kinase</fullName>
    </alternativeName>
</protein>
<feature type="chain" id="PRO_0000107669" description="Probable butyrate kinase">
    <location>
        <begin position="1"/>
        <end position="360"/>
    </location>
</feature>
<feature type="sequence conflict" description="In Ref. 1; AAD55375." evidence="2" ref="1">
    <original>S</original>
    <variation>P</variation>
    <location>
        <position position="48"/>
    </location>
</feature>
<feature type="sequence conflict" description="In Ref. 1; AAD55375." evidence="2" ref="1">
    <original>I</original>
    <variation>T</variation>
    <location>
        <position position="64"/>
    </location>
</feature>
<feature type="sequence conflict" description="In Ref. 1; AAD55375." evidence="2" ref="1">
    <original>S</original>
    <variation>T</variation>
    <location>
        <position position="149"/>
    </location>
</feature>
<feature type="sequence conflict" description="In Ref. 1; AAD55375." evidence="2" ref="1">
    <original>V</original>
    <variation>I</variation>
    <location>
        <position position="317"/>
    </location>
</feature>